<reference key="1">
    <citation type="journal article" date="2005" name="Nucleic Acids Res.">
        <title>Genome dynamics and diversity of Shigella species, the etiologic agents of bacillary dysentery.</title>
        <authorList>
            <person name="Yang F."/>
            <person name="Yang J."/>
            <person name="Zhang X."/>
            <person name="Chen L."/>
            <person name="Jiang Y."/>
            <person name="Yan Y."/>
            <person name="Tang X."/>
            <person name="Wang J."/>
            <person name="Xiong Z."/>
            <person name="Dong J."/>
            <person name="Xue Y."/>
            <person name="Zhu Y."/>
            <person name="Xu X."/>
            <person name="Sun L."/>
            <person name="Chen S."/>
            <person name="Nie H."/>
            <person name="Peng J."/>
            <person name="Xu J."/>
            <person name="Wang Y."/>
            <person name="Yuan Z."/>
            <person name="Wen Y."/>
            <person name="Yao Z."/>
            <person name="Shen Y."/>
            <person name="Qiang B."/>
            <person name="Hou Y."/>
            <person name="Yu J."/>
            <person name="Jin Q."/>
        </authorList>
    </citation>
    <scope>NUCLEOTIDE SEQUENCE [LARGE SCALE GENOMIC DNA]</scope>
    <source>
        <strain>Ss046</strain>
    </source>
</reference>
<sequence length="471" mass="53844">MKIKTRFAPSPTGYLHVGGARTALYSWLFARNHGGEFVLRIEDTDLERSTPEAIEAIMDGMNWLSLEWDEGPYYQTKRFDRYNAVIDQMLEEGTAYKCYCSKERLEALREEQMAKGEKPRYDGRCRHSHEHHADDEPCVVRFANPQEGSVVFDDQIRGPIEFSNQELDDLIIRRTDGSPTYNFCVVVDDWDMEITHVIRGEDHINNTPRQINILKALKAPVPVYAHVSMINGDDGKKLSKRHGAVSVMQYRDDGYLPEALLNYLVRLGWSHGDQEIFTREEMIKYFTLNAVSKSASAFNTDKLLWLNHHYINALPPEYVATHLQWHIEQENIDTRNGPQLADLVKLLGERCKTLKEMAQSCRYFYEDFAEFDADAAKKHLRPVARQPLEVVRDKLAAITDWTAENVHHAIQATADELEVGMGKVGMPLRVAVTGAGRSPALDVTVHAIGKTRSIERINKALDFIAERENQQ</sequence>
<evidence type="ECO:0000255" key="1">
    <source>
        <dbReference type="HAMAP-Rule" id="MF_00022"/>
    </source>
</evidence>
<feature type="chain" id="PRO_0000237401" description="Glutamate--tRNA ligase">
    <location>
        <begin position="1"/>
        <end position="471"/>
    </location>
</feature>
<feature type="short sequence motif" description="'HIGH' region" evidence="1">
    <location>
        <begin position="9"/>
        <end position="19"/>
    </location>
</feature>
<feature type="short sequence motif" description="'KMSKS' region" evidence="1">
    <location>
        <begin position="237"/>
        <end position="241"/>
    </location>
</feature>
<feature type="binding site" evidence="1">
    <location>
        <position position="98"/>
    </location>
    <ligand>
        <name>Zn(2+)</name>
        <dbReference type="ChEBI" id="CHEBI:29105"/>
    </ligand>
</feature>
<feature type="binding site" evidence="1">
    <location>
        <position position="100"/>
    </location>
    <ligand>
        <name>Zn(2+)</name>
        <dbReference type="ChEBI" id="CHEBI:29105"/>
    </ligand>
</feature>
<feature type="binding site" evidence="1">
    <location>
        <position position="125"/>
    </location>
    <ligand>
        <name>Zn(2+)</name>
        <dbReference type="ChEBI" id="CHEBI:29105"/>
    </ligand>
</feature>
<feature type="binding site" evidence="1">
    <location>
        <position position="127"/>
    </location>
    <ligand>
        <name>Zn(2+)</name>
        <dbReference type="ChEBI" id="CHEBI:29105"/>
    </ligand>
</feature>
<feature type="binding site" evidence="1">
    <location>
        <position position="240"/>
    </location>
    <ligand>
        <name>ATP</name>
        <dbReference type="ChEBI" id="CHEBI:30616"/>
    </ligand>
</feature>
<keyword id="KW-0030">Aminoacyl-tRNA synthetase</keyword>
<keyword id="KW-0067">ATP-binding</keyword>
<keyword id="KW-0963">Cytoplasm</keyword>
<keyword id="KW-0436">Ligase</keyword>
<keyword id="KW-0479">Metal-binding</keyword>
<keyword id="KW-0547">Nucleotide-binding</keyword>
<keyword id="KW-0648">Protein biosynthesis</keyword>
<keyword id="KW-1185">Reference proteome</keyword>
<keyword id="KW-0862">Zinc</keyword>
<dbReference type="EC" id="6.1.1.17" evidence="1"/>
<dbReference type="EMBL" id="CP000038">
    <property type="protein sequence ID" value="AAZ89126.1"/>
    <property type="molecule type" value="Genomic_DNA"/>
</dbReference>
<dbReference type="RefSeq" id="WP_000695658.1">
    <property type="nucleotide sequence ID" value="NC_007384.1"/>
</dbReference>
<dbReference type="SMR" id="Q3YZD6"/>
<dbReference type="KEGG" id="ssn:SSON_2491"/>
<dbReference type="HOGENOM" id="CLU_015768_6_0_6"/>
<dbReference type="Proteomes" id="UP000002529">
    <property type="component" value="Chromosome"/>
</dbReference>
<dbReference type="GO" id="GO:0005829">
    <property type="term" value="C:cytosol"/>
    <property type="evidence" value="ECO:0007669"/>
    <property type="project" value="TreeGrafter"/>
</dbReference>
<dbReference type="GO" id="GO:0005524">
    <property type="term" value="F:ATP binding"/>
    <property type="evidence" value="ECO:0007669"/>
    <property type="project" value="UniProtKB-UniRule"/>
</dbReference>
<dbReference type="GO" id="GO:0004818">
    <property type="term" value="F:glutamate-tRNA ligase activity"/>
    <property type="evidence" value="ECO:0007669"/>
    <property type="project" value="UniProtKB-UniRule"/>
</dbReference>
<dbReference type="GO" id="GO:0000049">
    <property type="term" value="F:tRNA binding"/>
    <property type="evidence" value="ECO:0007669"/>
    <property type="project" value="InterPro"/>
</dbReference>
<dbReference type="GO" id="GO:0008270">
    <property type="term" value="F:zinc ion binding"/>
    <property type="evidence" value="ECO:0007669"/>
    <property type="project" value="UniProtKB-UniRule"/>
</dbReference>
<dbReference type="GO" id="GO:0006424">
    <property type="term" value="P:glutamyl-tRNA aminoacylation"/>
    <property type="evidence" value="ECO:0007669"/>
    <property type="project" value="UniProtKB-UniRule"/>
</dbReference>
<dbReference type="CDD" id="cd00808">
    <property type="entry name" value="GluRS_core"/>
    <property type="match status" value="1"/>
</dbReference>
<dbReference type="FunFam" id="1.10.10.350:FF:000001">
    <property type="entry name" value="Glutamate--tRNA ligase"/>
    <property type="match status" value="1"/>
</dbReference>
<dbReference type="FunFam" id="3.40.50.620:FF:000007">
    <property type="entry name" value="Glutamate--tRNA ligase"/>
    <property type="match status" value="1"/>
</dbReference>
<dbReference type="Gene3D" id="1.10.10.350">
    <property type="match status" value="1"/>
</dbReference>
<dbReference type="Gene3D" id="3.40.50.620">
    <property type="entry name" value="HUPs"/>
    <property type="match status" value="1"/>
</dbReference>
<dbReference type="HAMAP" id="MF_00022">
    <property type="entry name" value="Glu_tRNA_synth_type1"/>
    <property type="match status" value="1"/>
</dbReference>
<dbReference type="InterPro" id="IPR045462">
    <property type="entry name" value="aa-tRNA-synth_I_cd-bd"/>
</dbReference>
<dbReference type="InterPro" id="IPR020751">
    <property type="entry name" value="aa-tRNA-synth_I_codon-bd_sub2"/>
</dbReference>
<dbReference type="InterPro" id="IPR001412">
    <property type="entry name" value="aa-tRNA-synth_I_CS"/>
</dbReference>
<dbReference type="InterPro" id="IPR008925">
    <property type="entry name" value="aa_tRNA-synth_I_cd-bd_sf"/>
</dbReference>
<dbReference type="InterPro" id="IPR004527">
    <property type="entry name" value="Glu-tRNA-ligase_bac/mito"/>
</dbReference>
<dbReference type="InterPro" id="IPR000924">
    <property type="entry name" value="Glu/Gln-tRNA-synth"/>
</dbReference>
<dbReference type="InterPro" id="IPR020058">
    <property type="entry name" value="Glu/Gln-tRNA-synth_Ib_cat-dom"/>
</dbReference>
<dbReference type="InterPro" id="IPR049940">
    <property type="entry name" value="GluQ/Sye"/>
</dbReference>
<dbReference type="InterPro" id="IPR033910">
    <property type="entry name" value="GluRS_core"/>
</dbReference>
<dbReference type="InterPro" id="IPR014729">
    <property type="entry name" value="Rossmann-like_a/b/a_fold"/>
</dbReference>
<dbReference type="NCBIfam" id="TIGR00464">
    <property type="entry name" value="gltX_bact"/>
    <property type="match status" value="1"/>
</dbReference>
<dbReference type="PANTHER" id="PTHR43311">
    <property type="entry name" value="GLUTAMATE--TRNA LIGASE"/>
    <property type="match status" value="1"/>
</dbReference>
<dbReference type="PANTHER" id="PTHR43311:SF2">
    <property type="entry name" value="GLUTAMATE--TRNA LIGASE, MITOCHONDRIAL-RELATED"/>
    <property type="match status" value="1"/>
</dbReference>
<dbReference type="Pfam" id="PF19269">
    <property type="entry name" value="Anticodon_2"/>
    <property type="match status" value="1"/>
</dbReference>
<dbReference type="Pfam" id="PF00749">
    <property type="entry name" value="tRNA-synt_1c"/>
    <property type="match status" value="1"/>
</dbReference>
<dbReference type="PRINTS" id="PR00987">
    <property type="entry name" value="TRNASYNTHGLU"/>
</dbReference>
<dbReference type="SUPFAM" id="SSF48163">
    <property type="entry name" value="An anticodon-binding domain of class I aminoacyl-tRNA synthetases"/>
    <property type="match status" value="1"/>
</dbReference>
<dbReference type="SUPFAM" id="SSF52374">
    <property type="entry name" value="Nucleotidylyl transferase"/>
    <property type="match status" value="1"/>
</dbReference>
<dbReference type="PROSITE" id="PS00178">
    <property type="entry name" value="AA_TRNA_LIGASE_I"/>
    <property type="match status" value="1"/>
</dbReference>
<proteinExistence type="inferred from homology"/>
<organism>
    <name type="scientific">Shigella sonnei (strain Ss046)</name>
    <dbReference type="NCBI Taxonomy" id="300269"/>
    <lineage>
        <taxon>Bacteria</taxon>
        <taxon>Pseudomonadati</taxon>
        <taxon>Pseudomonadota</taxon>
        <taxon>Gammaproteobacteria</taxon>
        <taxon>Enterobacterales</taxon>
        <taxon>Enterobacteriaceae</taxon>
        <taxon>Shigella</taxon>
    </lineage>
</organism>
<gene>
    <name evidence="1" type="primary">gltX</name>
    <name type="ordered locus">SSON_2491</name>
</gene>
<name>SYE_SHISS</name>
<protein>
    <recommendedName>
        <fullName evidence="1">Glutamate--tRNA ligase</fullName>
        <ecNumber evidence="1">6.1.1.17</ecNumber>
    </recommendedName>
    <alternativeName>
        <fullName evidence="1">Glutamyl-tRNA synthetase</fullName>
        <shortName evidence="1">GluRS</shortName>
    </alternativeName>
</protein>
<accession>Q3YZD6</accession>
<comment type="function">
    <text evidence="1">Catalyzes the attachment of glutamate to tRNA(Glu) in a two-step reaction: glutamate is first activated by ATP to form Glu-AMP and then transferred to the acceptor end of tRNA(Glu).</text>
</comment>
<comment type="catalytic activity">
    <reaction evidence="1">
        <text>tRNA(Glu) + L-glutamate + ATP = L-glutamyl-tRNA(Glu) + AMP + diphosphate</text>
        <dbReference type="Rhea" id="RHEA:23540"/>
        <dbReference type="Rhea" id="RHEA-COMP:9663"/>
        <dbReference type="Rhea" id="RHEA-COMP:9680"/>
        <dbReference type="ChEBI" id="CHEBI:29985"/>
        <dbReference type="ChEBI" id="CHEBI:30616"/>
        <dbReference type="ChEBI" id="CHEBI:33019"/>
        <dbReference type="ChEBI" id="CHEBI:78442"/>
        <dbReference type="ChEBI" id="CHEBI:78520"/>
        <dbReference type="ChEBI" id="CHEBI:456215"/>
        <dbReference type="EC" id="6.1.1.17"/>
    </reaction>
</comment>
<comment type="cofactor">
    <cofactor evidence="1">
        <name>Zn(2+)</name>
        <dbReference type="ChEBI" id="CHEBI:29105"/>
    </cofactor>
    <text evidence="1">Binds 1 zinc ion per subunit.</text>
</comment>
<comment type="subunit">
    <text evidence="1">Monomer.</text>
</comment>
<comment type="subcellular location">
    <subcellularLocation>
        <location evidence="1">Cytoplasm</location>
    </subcellularLocation>
</comment>
<comment type="similarity">
    <text evidence="1">Belongs to the class-I aminoacyl-tRNA synthetase family. Glutamate--tRNA ligase type 1 subfamily.</text>
</comment>